<organism>
    <name type="scientific">Mannheimia succiniciproducens (strain KCTC 0769BP / MBEL55E)</name>
    <dbReference type="NCBI Taxonomy" id="221988"/>
    <lineage>
        <taxon>Bacteria</taxon>
        <taxon>Pseudomonadati</taxon>
        <taxon>Pseudomonadota</taxon>
        <taxon>Gammaproteobacteria</taxon>
        <taxon>Pasteurellales</taxon>
        <taxon>Pasteurellaceae</taxon>
        <taxon>Basfia</taxon>
    </lineage>
</organism>
<sequence length="239" mass="26951">MRLPPLQAAKFIRRYKRFMADVELANGNILTIHCANTGAMTGCAEKGDTVWYSDSKSTTRKYPCSWELTELSNGNLVCINTHRSNQLVQEALQNKVIKELAGYSEIYPEVKYGEENSRIDFLLKGEGLPDCYVEVKSITLVKNNIGMFPDAVTTRGQKHVRELLAMKKQGYRAVVLFAGLHNGFDCFKTAEYIDPDYDKLLRQAMKEGVEVYAYAGKFDKIQEIPTALSLAEVVPLCFN</sequence>
<feature type="chain" id="PRO_0000152291" description="Sugar fermentation stimulation protein homolog">
    <location>
        <begin position="1"/>
        <end position="239"/>
    </location>
</feature>
<gene>
    <name evidence="1" type="primary">sfsA</name>
    <name type="ordered locus">MS1230</name>
</gene>
<protein>
    <recommendedName>
        <fullName evidence="1">Sugar fermentation stimulation protein homolog</fullName>
    </recommendedName>
</protein>
<comment type="similarity">
    <text evidence="1">Belongs to the SfsA family.</text>
</comment>
<evidence type="ECO:0000255" key="1">
    <source>
        <dbReference type="HAMAP-Rule" id="MF_00095"/>
    </source>
</evidence>
<dbReference type="EMBL" id="AE016827">
    <property type="protein sequence ID" value="AAU37837.1"/>
    <property type="molecule type" value="Genomic_DNA"/>
</dbReference>
<dbReference type="RefSeq" id="WP_011200404.1">
    <property type="nucleotide sequence ID" value="NC_006300.1"/>
</dbReference>
<dbReference type="SMR" id="Q65T73"/>
<dbReference type="STRING" id="221988.MS1230"/>
<dbReference type="KEGG" id="msu:MS1230"/>
<dbReference type="eggNOG" id="COG1489">
    <property type="taxonomic scope" value="Bacteria"/>
</dbReference>
<dbReference type="HOGENOM" id="CLU_052299_2_0_6"/>
<dbReference type="OrthoDB" id="9802365at2"/>
<dbReference type="Proteomes" id="UP000000607">
    <property type="component" value="Chromosome"/>
</dbReference>
<dbReference type="GO" id="GO:0003677">
    <property type="term" value="F:DNA binding"/>
    <property type="evidence" value="ECO:0007669"/>
    <property type="project" value="InterPro"/>
</dbReference>
<dbReference type="CDD" id="cd22359">
    <property type="entry name" value="SfsA-like_bacterial"/>
    <property type="match status" value="1"/>
</dbReference>
<dbReference type="FunFam" id="2.40.50.580:FF:000001">
    <property type="entry name" value="Sugar fermentation stimulation protein A"/>
    <property type="match status" value="1"/>
</dbReference>
<dbReference type="FunFam" id="3.40.1350.60:FF:000001">
    <property type="entry name" value="Sugar fermentation stimulation protein A"/>
    <property type="match status" value="1"/>
</dbReference>
<dbReference type="Gene3D" id="2.40.50.580">
    <property type="match status" value="1"/>
</dbReference>
<dbReference type="Gene3D" id="3.40.1350.60">
    <property type="match status" value="1"/>
</dbReference>
<dbReference type="HAMAP" id="MF_00095">
    <property type="entry name" value="SfsA"/>
    <property type="match status" value="1"/>
</dbReference>
<dbReference type="InterPro" id="IPR005224">
    <property type="entry name" value="SfsA"/>
</dbReference>
<dbReference type="InterPro" id="IPR040452">
    <property type="entry name" value="SfsA_C"/>
</dbReference>
<dbReference type="InterPro" id="IPR041465">
    <property type="entry name" value="SfsA_N"/>
</dbReference>
<dbReference type="NCBIfam" id="TIGR00230">
    <property type="entry name" value="sfsA"/>
    <property type="match status" value="1"/>
</dbReference>
<dbReference type="PANTHER" id="PTHR30545">
    <property type="entry name" value="SUGAR FERMENTATION STIMULATION PROTEIN A"/>
    <property type="match status" value="1"/>
</dbReference>
<dbReference type="PANTHER" id="PTHR30545:SF2">
    <property type="entry name" value="SUGAR FERMENTATION STIMULATION PROTEIN A"/>
    <property type="match status" value="1"/>
</dbReference>
<dbReference type="Pfam" id="PF03749">
    <property type="entry name" value="SfsA"/>
    <property type="match status" value="1"/>
</dbReference>
<dbReference type="Pfam" id="PF17746">
    <property type="entry name" value="SfsA_N"/>
    <property type="match status" value="1"/>
</dbReference>
<reference key="1">
    <citation type="journal article" date="2004" name="Nat. Biotechnol.">
        <title>The genome sequence of the capnophilic rumen bacterium Mannheimia succiniciproducens.</title>
        <authorList>
            <person name="Hong S.H."/>
            <person name="Kim J.S."/>
            <person name="Lee S.Y."/>
            <person name="In Y.H."/>
            <person name="Choi S.S."/>
            <person name="Rih J.-K."/>
            <person name="Kim C.H."/>
            <person name="Jeong H."/>
            <person name="Hur C.G."/>
            <person name="Kim J.J."/>
        </authorList>
    </citation>
    <scope>NUCLEOTIDE SEQUENCE [LARGE SCALE GENOMIC DNA]</scope>
    <source>
        <strain>KCTC 0769BP / MBEL55E</strain>
    </source>
</reference>
<name>SFSA_MANSM</name>
<proteinExistence type="inferred from homology"/>
<accession>Q65T73</accession>